<feature type="chain" id="PRO_1000099415" description="DNA repair protein RecO">
    <location>
        <begin position="1"/>
        <end position="239"/>
    </location>
</feature>
<accession>B4SRK8</accession>
<proteinExistence type="inferred from homology"/>
<evidence type="ECO:0000255" key="1">
    <source>
        <dbReference type="HAMAP-Rule" id="MF_00201"/>
    </source>
</evidence>
<name>RECO_STRM5</name>
<organism>
    <name type="scientific">Stenotrophomonas maltophilia (strain R551-3)</name>
    <dbReference type="NCBI Taxonomy" id="391008"/>
    <lineage>
        <taxon>Bacteria</taxon>
        <taxon>Pseudomonadati</taxon>
        <taxon>Pseudomonadota</taxon>
        <taxon>Gammaproteobacteria</taxon>
        <taxon>Lysobacterales</taxon>
        <taxon>Lysobacteraceae</taxon>
        <taxon>Stenotrophomonas</taxon>
        <taxon>Stenotrophomonas maltophilia group</taxon>
    </lineage>
</organism>
<protein>
    <recommendedName>
        <fullName evidence="1">DNA repair protein RecO</fullName>
    </recommendedName>
    <alternativeName>
        <fullName evidence="1">Recombination protein O</fullName>
    </alternativeName>
</protein>
<reference key="1">
    <citation type="submission" date="2008-06" db="EMBL/GenBank/DDBJ databases">
        <title>Complete sequence of Stenotrophomonas maltophilia R551-3.</title>
        <authorList>
            <consortium name="US DOE Joint Genome Institute"/>
            <person name="Lucas S."/>
            <person name="Copeland A."/>
            <person name="Lapidus A."/>
            <person name="Glavina del Rio T."/>
            <person name="Dalin E."/>
            <person name="Tice H."/>
            <person name="Pitluck S."/>
            <person name="Chain P."/>
            <person name="Malfatti S."/>
            <person name="Shin M."/>
            <person name="Vergez L."/>
            <person name="Lang D."/>
            <person name="Schmutz J."/>
            <person name="Larimer F."/>
            <person name="Land M."/>
            <person name="Hauser L."/>
            <person name="Kyrpides N."/>
            <person name="Mikhailova N."/>
            <person name="Taghavi S."/>
            <person name="Monchy S."/>
            <person name="Newman L."/>
            <person name="Vangronsveld J."/>
            <person name="van der Lelie D."/>
            <person name="Richardson P."/>
        </authorList>
    </citation>
    <scope>NUCLEOTIDE SEQUENCE [LARGE SCALE GENOMIC DNA]</scope>
    <source>
        <strain>R551-3</strain>
    </source>
</reference>
<sequence>MLIEDDTGFVLHARAYRETSLLVEVLSAQHGRIGVLARGVSTAKGQVLRAALQPLQWIRFSALQRGELAQLRGAEALDAAPRLVGQAMLAGFYLSELTLRLAPRQDPLPELYLAYGEARARLGVGAGLAWTLRRFERELLTSLGLGFELDSASDGQPIDPAARYELDPQEGAQRLLSERAGERRAAATGSALLALAADEEPDAADLASLRLPMRRVLAHHLGPRGLKSWEMLEQLAPKR</sequence>
<gene>
    <name evidence="1" type="primary">recO</name>
    <name type="ordered locus">Smal_2973</name>
</gene>
<comment type="function">
    <text evidence="1">Involved in DNA repair and RecF pathway recombination.</text>
</comment>
<comment type="similarity">
    <text evidence="1">Belongs to the RecO family.</text>
</comment>
<dbReference type="EMBL" id="CP001111">
    <property type="protein sequence ID" value="ACF52672.1"/>
    <property type="molecule type" value="Genomic_DNA"/>
</dbReference>
<dbReference type="RefSeq" id="WP_012511807.1">
    <property type="nucleotide sequence ID" value="NC_011071.1"/>
</dbReference>
<dbReference type="SMR" id="B4SRK8"/>
<dbReference type="STRING" id="391008.Smal_2973"/>
<dbReference type="KEGG" id="smt:Smal_2973"/>
<dbReference type="eggNOG" id="COG1381">
    <property type="taxonomic scope" value="Bacteria"/>
</dbReference>
<dbReference type="HOGENOM" id="CLU_066645_1_0_6"/>
<dbReference type="OrthoDB" id="9804792at2"/>
<dbReference type="Proteomes" id="UP000001867">
    <property type="component" value="Chromosome"/>
</dbReference>
<dbReference type="GO" id="GO:0043590">
    <property type="term" value="C:bacterial nucleoid"/>
    <property type="evidence" value="ECO:0007669"/>
    <property type="project" value="TreeGrafter"/>
</dbReference>
<dbReference type="GO" id="GO:0006310">
    <property type="term" value="P:DNA recombination"/>
    <property type="evidence" value="ECO:0007669"/>
    <property type="project" value="UniProtKB-UniRule"/>
</dbReference>
<dbReference type="GO" id="GO:0006302">
    <property type="term" value="P:double-strand break repair"/>
    <property type="evidence" value="ECO:0007669"/>
    <property type="project" value="TreeGrafter"/>
</dbReference>
<dbReference type="Gene3D" id="2.40.50.140">
    <property type="entry name" value="Nucleic acid-binding proteins"/>
    <property type="match status" value="1"/>
</dbReference>
<dbReference type="Gene3D" id="1.20.1440.120">
    <property type="entry name" value="Recombination protein O, C-terminal domain"/>
    <property type="match status" value="1"/>
</dbReference>
<dbReference type="HAMAP" id="MF_00201">
    <property type="entry name" value="RecO"/>
    <property type="match status" value="1"/>
</dbReference>
<dbReference type="InterPro" id="IPR022572">
    <property type="entry name" value="DNA_rep/recomb_RecO_N"/>
</dbReference>
<dbReference type="InterPro" id="IPR012340">
    <property type="entry name" value="NA-bd_OB-fold"/>
</dbReference>
<dbReference type="InterPro" id="IPR003717">
    <property type="entry name" value="RecO"/>
</dbReference>
<dbReference type="InterPro" id="IPR042242">
    <property type="entry name" value="RecO_C"/>
</dbReference>
<dbReference type="NCBIfam" id="TIGR00613">
    <property type="entry name" value="reco"/>
    <property type="match status" value="1"/>
</dbReference>
<dbReference type="PANTHER" id="PTHR33991">
    <property type="entry name" value="DNA REPAIR PROTEIN RECO"/>
    <property type="match status" value="1"/>
</dbReference>
<dbReference type="PANTHER" id="PTHR33991:SF1">
    <property type="entry name" value="DNA REPAIR PROTEIN RECO"/>
    <property type="match status" value="1"/>
</dbReference>
<dbReference type="Pfam" id="PF02565">
    <property type="entry name" value="RecO_C"/>
    <property type="match status" value="1"/>
</dbReference>
<dbReference type="Pfam" id="PF11967">
    <property type="entry name" value="RecO_N"/>
    <property type="match status" value="1"/>
</dbReference>
<dbReference type="SUPFAM" id="SSF50249">
    <property type="entry name" value="Nucleic acid-binding proteins"/>
    <property type="match status" value="1"/>
</dbReference>
<keyword id="KW-0227">DNA damage</keyword>
<keyword id="KW-0233">DNA recombination</keyword>
<keyword id="KW-0234">DNA repair</keyword>